<feature type="chain" id="PRO_0000410289" description="Vacuolar-sorting protein SNF7">
    <location>
        <begin position="1"/>
        <end position="220"/>
    </location>
</feature>
<feature type="region of interest" description="Disordered" evidence="3">
    <location>
        <begin position="175"/>
        <end position="210"/>
    </location>
</feature>
<feature type="coiled-coil region" evidence="2">
    <location>
        <begin position="15"/>
        <end position="86"/>
    </location>
</feature>
<feature type="coiled-coil region" evidence="2">
    <location>
        <begin position="153"/>
        <end position="220"/>
    </location>
</feature>
<gene>
    <name type="primary">SNF7</name>
    <name type="synonym">VPS32</name>
    <name type="ordered locus">CNBC6300</name>
</gene>
<accession>P0CR55</accession>
<accession>Q55V53</accession>
<accession>Q5KL29</accession>
<reference key="1">
    <citation type="journal article" date="2005" name="Science">
        <title>The genome of the basidiomycetous yeast and human pathogen Cryptococcus neoformans.</title>
        <authorList>
            <person name="Loftus B.J."/>
            <person name="Fung E."/>
            <person name="Roncaglia P."/>
            <person name="Rowley D."/>
            <person name="Amedeo P."/>
            <person name="Bruno D."/>
            <person name="Vamathevan J."/>
            <person name="Miranda M."/>
            <person name="Anderson I.J."/>
            <person name="Fraser J.A."/>
            <person name="Allen J.E."/>
            <person name="Bosdet I.E."/>
            <person name="Brent M.R."/>
            <person name="Chiu R."/>
            <person name="Doering T.L."/>
            <person name="Donlin M.J."/>
            <person name="D'Souza C.A."/>
            <person name="Fox D.S."/>
            <person name="Grinberg V."/>
            <person name="Fu J."/>
            <person name="Fukushima M."/>
            <person name="Haas B.J."/>
            <person name="Huang J.C."/>
            <person name="Janbon G."/>
            <person name="Jones S.J.M."/>
            <person name="Koo H.L."/>
            <person name="Krzywinski M.I."/>
            <person name="Kwon-Chung K.J."/>
            <person name="Lengeler K.B."/>
            <person name="Maiti R."/>
            <person name="Marra M.A."/>
            <person name="Marra R.E."/>
            <person name="Mathewson C.A."/>
            <person name="Mitchell T.G."/>
            <person name="Pertea M."/>
            <person name="Riggs F.R."/>
            <person name="Salzberg S.L."/>
            <person name="Schein J.E."/>
            <person name="Shvartsbeyn A."/>
            <person name="Shin H."/>
            <person name="Shumway M."/>
            <person name="Specht C.A."/>
            <person name="Suh B.B."/>
            <person name="Tenney A."/>
            <person name="Utterback T.R."/>
            <person name="Wickes B.L."/>
            <person name="Wortman J.R."/>
            <person name="Wye N.H."/>
            <person name="Kronstad J.W."/>
            <person name="Lodge J.K."/>
            <person name="Heitman J."/>
            <person name="Davis R.W."/>
            <person name="Fraser C.M."/>
            <person name="Hyman R.W."/>
        </authorList>
    </citation>
    <scope>NUCLEOTIDE SEQUENCE [LARGE SCALE GENOMIC DNA]</scope>
    <source>
        <strain>B-3501A</strain>
    </source>
</reference>
<comment type="function">
    <text evidence="1">Required for the sorting and concentration of proteins resulting in the entry of these proteins into the invaginating vesicles of the multivesicular body (MVB). Also required for the proteolytic cleavage of the transcription factor RIM101 in response to alkaline ambient pH (By similarity).</text>
</comment>
<comment type="subunit">
    <text evidence="1">A component of the endosomal sorting required for transport complex III (ESCRT-III).</text>
</comment>
<comment type="subcellular location">
    <subcellularLocation>
        <location evidence="1">Cytoplasm</location>
    </subcellularLocation>
    <subcellularLocation>
        <location evidence="1">Endosome membrane</location>
        <topology evidence="1">Peripheral membrane protein</topology>
    </subcellularLocation>
</comment>
<comment type="similarity">
    <text evidence="4">Belongs to the SNF7 family.</text>
</comment>
<name>SNF7_CRYNB</name>
<proteinExistence type="inferred from homology"/>
<dbReference type="EMBL" id="AAEY01000017">
    <property type="protein sequence ID" value="EAL21592.1"/>
    <property type="molecule type" value="Genomic_DNA"/>
</dbReference>
<dbReference type="RefSeq" id="XP_776239.1">
    <property type="nucleotide sequence ID" value="XM_771146.1"/>
</dbReference>
<dbReference type="SMR" id="P0CR55"/>
<dbReference type="EnsemblFungi" id="AAW42105">
    <property type="protein sequence ID" value="AAW42105"/>
    <property type="gene ID" value="CNC00960"/>
</dbReference>
<dbReference type="GeneID" id="4935297"/>
<dbReference type="KEGG" id="cnb:CNBC6300"/>
<dbReference type="VEuPathDB" id="FungiDB:CNBC6300"/>
<dbReference type="HOGENOM" id="CLU_071097_1_1_1"/>
<dbReference type="OrthoDB" id="8120at5206"/>
<dbReference type="GO" id="GO:0009898">
    <property type="term" value="C:cytoplasmic side of plasma membrane"/>
    <property type="evidence" value="ECO:0007669"/>
    <property type="project" value="TreeGrafter"/>
</dbReference>
<dbReference type="GO" id="GO:0005829">
    <property type="term" value="C:cytosol"/>
    <property type="evidence" value="ECO:0007669"/>
    <property type="project" value="EnsemblFungi"/>
</dbReference>
<dbReference type="GO" id="GO:0000815">
    <property type="term" value="C:ESCRT III complex"/>
    <property type="evidence" value="ECO:0007669"/>
    <property type="project" value="EnsemblFungi"/>
</dbReference>
<dbReference type="GO" id="GO:0005771">
    <property type="term" value="C:multivesicular body"/>
    <property type="evidence" value="ECO:0007669"/>
    <property type="project" value="TreeGrafter"/>
</dbReference>
<dbReference type="GO" id="GO:0042802">
    <property type="term" value="F:identical protein binding"/>
    <property type="evidence" value="ECO:0007669"/>
    <property type="project" value="EnsemblFungi"/>
</dbReference>
<dbReference type="GO" id="GO:1904669">
    <property type="term" value="P:ATP export"/>
    <property type="evidence" value="ECO:0007669"/>
    <property type="project" value="EnsemblFungi"/>
</dbReference>
<dbReference type="GO" id="GO:0070676">
    <property type="term" value="P:intralumenal vesicle formation"/>
    <property type="evidence" value="ECO:0007669"/>
    <property type="project" value="EnsemblFungi"/>
</dbReference>
<dbReference type="GO" id="GO:0007031">
    <property type="term" value="P:peroxisome organization"/>
    <property type="evidence" value="ECO:0007669"/>
    <property type="project" value="EnsemblFungi"/>
</dbReference>
<dbReference type="GO" id="GO:0043328">
    <property type="term" value="P:protein transport to vacuole involved in ubiquitin-dependent protein catabolic process via the multivesicular body sorting pathway"/>
    <property type="evidence" value="ECO:0007669"/>
    <property type="project" value="EnsemblFungi"/>
</dbReference>
<dbReference type="GO" id="GO:0061709">
    <property type="term" value="P:reticulophagy"/>
    <property type="evidence" value="ECO:0007669"/>
    <property type="project" value="EnsemblFungi"/>
</dbReference>
<dbReference type="Gene3D" id="6.10.250.1710">
    <property type="match status" value="1"/>
</dbReference>
<dbReference type="Gene3D" id="1.10.287.1060">
    <property type="entry name" value="ESAT-6-like"/>
    <property type="match status" value="1"/>
</dbReference>
<dbReference type="InterPro" id="IPR005024">
    <property type="entry name" value="Snf7_fam"/>
</dbReference>
<dbReference type="PANTHER" id="PTHR22761">
    <property type="entry name" value="CHARGED MULTIVESICULAR BODY PROTEIN"/>
    <property type="match status" value="1"/>
</dbReference>
<dbReference type="PANTHER" id="PTHR22761:SF10">
    <property type="entry name" value="GH13992P"/>
    <property type="match status" value="1"/>
</dbReference>
<dbReference type="Pfam" id="PF03357">
    <property type="entry name" value="Snf7"/>
    <property type="match status" value="1"/>
</dbReference>
<sequence length="220" mass="24334">MSGWMSYFTGRKDTRESARDAIVGLRQQLLMLEKKEEFLQKKIEEEMKKAKANATGNKRLAMAALRQKKAHENELDRIAGTRLTLETQVNAIESANLNAETMVAMKKGADALKGIHSNLTAEGVDATMDKIREQMDLTNDISDAISNPVGMGIVLDEDDLKEELEALEQEQLDDRLAGADRVPSHLPASPVGQTTGRAAVEEDEDDEEAQLRKLQAELAM</sequence>
<keyword id="KW-0175">Coiled coil</keyword>
<keyword id="KW-0963">Cytoplasm</keyword>
<keyword id="KW-0967">Endosome</keyword>
<keyword id="KW-0472">Membrane</keyword>
<organism>
    <name type="scientific">Cryptococcus neoformans var. neoformans serotype D (strain B-3501A)</name>
    <name type="common">Filobasidiella neoformans</name>
    <dbReference type="NCBI Taxonomy" id="283643"/>
    <lineage>
        <taxon>Eukaryota</taxon>
        <taxon>Fungi</taxon>
        <taxon>Dikarya</taxon>
        <taxon>Basidiomycota</taxon>
        <taxon>Agaricomycotina</taxon>
        <taxon>Tremellomycetes</taxon>
        <taxon>Tremellales</taxon>
        <taxon>Cryptococcaceae</taxon>
        <taxon>Cryptococcus</taxon>
        <taxon>Cryptococcus neoformans species complex</taxon>
    </lineage>
</organism>
<evidence type="ECO:0000250" key="1"/>
<evidence type="ECO:0000255" key="2"/>
<evidence type="ECO:0000256" key="3">
    <source>
        <dbReference type="SAM" id="MobiDB-lite"/>
    </source>
</evidence>
<evidence type="ECO:0000305" key="4"/>
<protein>
    <recommendedName>
        <fullName>Vacuolar-sorting protein SNF7</fullName>
    </recommendedName>
    <alternativeName>
        <fullName>Vacuolar protein-sorting-associated protein 32</fullName>
    </alternativeName>
</protein>